<protein>
    <recommendedName>
        <fullName evidence="1">Cytochrome c biogenesis ATP-binding export protein CcmA</fullName>
        <ecNumber evidence="1">7.6.2.5</ecNumber>
    </recommendedName>
    <alternativeName>
        <fullName evidence="1">Heme exporter protein A</fullName>
    </alternativeName>
</protein>
<comment type="function">
    <text evidence="1">Part of the ABC transporter complex CcmAB involved in the biogenesis of c-type cytochromes; once thought to export heme, this seems not to be the case, but its exact role is uncertain. Responsible for energy coupling to the transport system.</text>
</comment>
<comment type="catalytic activity">
    <reaction evidence="1">
        <text>heme b(in) + ATP + H2O = heme b(out) + ADP + phosphate + H(+)</text>
        <dbReference type="Rhea" id="RHEA:19261"/>
        <dbReference type="ChEBI" id="CHEBI:15377"/>
        <dbReference type="ChEBI" id="CHEBI:15378"/>
        <dbReference type="ChEBI" id="CHEBI:30616"/>
        <dbReference type="ChEBI" id="CHEBI:43474"/>
        <dbReference type="ChEBI" id="CHEBI:60344"/>
        <dbReference type="ChEBI" id="CHEBI:456216"/>
        <dbReference type="EC" id="7.6.2.5"/>
    </reaction>
</comment>
<comment type="subunit">
    <text evidence="1">The complex is composed of two ATP-binding proteins (CcmA) and two transmembrane proteins (CcmB).</text>
</comment>
<comment type="subcellular location">
    <subcellularLocation>
        <location evidence="1">Cell inner membrane</location>
        <topology evidence="1">Peripheral membrane protein</topology>
    </subcellularLocation>
</comment>
<comment type="similarity">
    <text evidence="1">Belongs to the ABC transporter superfamily. CcmA exporter (TC 3.A.1.107) family.</text>
</comment>
<reference key="1">
    <citation type="journal article" date="2004" name="Proc. Natl. Acad. Sci. U.S.A.">
        <title>Insights into the evolution of Yersinia pestis through whole-genome comparison with Yersinia pseudotuberculosis.</title>
        <authorList>
            <person name="Chain P.S.G."/>
            <person name="Carniel E."/>
            <person name="Larimer F.W."/>
            <person name="Lamerdin J."/>
            <person name="Stoutland P.O."/>
            <person name="Regala W.M."/>
            <person name="Georgescu A.M."/>
            <person name="Vergez L.M."/>
            <person name="Land M.L."/>
            <person name="Motin V.L."/>
            <person name="Brubaker R.R."/>
            <person name="Fowler J."/>
            <person name="Hinnebusch J."/>
            <person name="Marceau M."/>
            <person name="Medigue C."/>
            <person name="Simonet M."/>
            <person name="Chenal-Francisque V."/>
            <person name="Souza B."/>
            <person name="Dacheux D."/>
            <person name="Elliott J.M."/>
            <person name="Derbise A."/>
            <person name="Hauser L.J."/>
            <person name="Garcia E."/>
        </authorList>
    </citation>
    <scope>NUCLEOTIDE SEQUENCE [LARGE SCALE GENOMIC DNA]</scope>
    <source>
        <strain>IP32953</strain>
    </source>
</reference>
<keyword id="KW-0067">ATP-binding</keyword>
<keyword id="KW-0997">Cell inner membrane</keyword>
<keyword id="KW-1003">Cell membrane</keyword>
<keyword id="KW-0201">Cytochrome c-type biogenesis</keyword>
<keyword id="KW-0472">Membrane</keyword>
<keyword id="KW-0547">Nucleotide-binding</keyword>
<keyword id="KW-1278">Translocase</keyword>
<keyword id="KW-0813">Transport</keyword>
<name>CCMA_YERPS</name>
<proteinExistence type="inferred from homology"/>
<sequence length="218" mass="23932">MLEAKNLTCIRDDRCLFQQLSFCIAPGEIVQIEGPNGAGKTSLLRILAGLAEADEGQVNWRDNNIRRDRAKYHQDLLFLGHQPGIKSVLTPFENLLFYQSVFQKVDSAAIWQALAQVGLVGYEDLPVSQLSAGQQRRVALARLWLSPAPLWILDEPLTAIDKQGVSTLLALFVQHAAKGGMVLLTTHQDLGAVSHNVRKICLANTQEKSCLSACCAVN</sequence>
<dbReference type="EC" id="7.6.2.5" evidence="1"/>
<dbReference type="EMBL" id="BX936398">
    <property type="protein sequence ID" value="CAH21887.1"/>
    <property type="molecule type" value="Genomic_DNA"/>
</dbReference>
<dbReference type="RefSeq" id="WP_011192700.1">
    <property type="nucleotide sequence ID" value="NC_006155.1"/>
</dbReference>
<dbReference type="SMR" id="Q668T8"/>
<dbReference type="KEGG" id="ypo:BZ17_3990"/>
<dbReference type="KEGG" id="yps:YPTB2649"/>
<dbReference type="PATRIC" id="fig|273123.14.peg.4187"/>
<dbReference type="Proteomes" id="UP000001011">
    <property type="component" value="Chromosome"/>
</dbReference>
<dbReference type="GO" id="GO:0005886">
    <property type="term" value="C:plasma membrane"/>
    <property type="evidence" value="ECO:0007669"/>
    <property type="project" value="UniProtKB-SubCell"/>
</dbReference>
<dbReference type="GO" id="GO:0015439">
    <property type="term" value="F:ABC-type heme transporter activity"/>
    <property type="evidence" value="ECO:0007669"/>
    <property type="project" value="UniProtKB-EC"/>
</dbReference>
<dbReference type="GO" id="GO:0005524">
    <property type="term" value="F:ATP binding"/>
    <property type="evidence" value="ECO:0007669"/>
    <property type="project" value="UniProtKB-KW"/>
</dbReference>
<dbReference type="GO" id="GO:0016887">
    <property type="term" value="F:ATP hydrolysis activity"/>
    <property type="evidence" value="ECO:0007669"/>
    <property type="project" value="InterPro"/>
</dbReference>
<dbReference type="GO" id="GO:0017004">
    <property type="term" value="P:cytochrome complex assembly"/>
    <property type="evidence" value="ECO:0007669"/>
    <property type="project" value="UniProtKB-KW"/>
</dbReference>
<dbReference type="CDD" id="cd03231">
    <property type="entry name" value="ABC_CcmA_heme_exporter"/>
    <property type="match status" value="1"/>
</dbReference>
<dbReference type="Gene3D" id="3.40.50.300">
    <property type="entry name" value="P-loop containing nucleotide triphosphate hydrolases"/>
    <property type="match status" value="1"/>
</dbReference>
<dbReference type="InterPro" id="IPR003593">
    <property type="entry name" value="AAA+_ATPase"/>
</dbReference>
<dbReference type="InterPro" id="IPR003439">
    <property type="entry name" value="ABC_transporter-like_ATP-bd"/>
</dbReference>
<dbReference type="InterPro" id="IPR017871">
    <property type="entry name" value="ABC_transporter-like_CS"/>
</dbReference>
<dbReference type="InterPro" id="IPR005895">
    <property type="entry name" value="ABC_transptr_haem_export_CcmA"/>
</dbReference>
<dbReference type="InterPro" id="IPR027417">
    <property type="entry name" value="P-loop_NTPase"/>
</dbReference>
<dbReference type="NCBIfam" id="TIGR01189">
    <property type="entry name" value="ccmA"/>
    <property type="match status" value="1"/>
</dbReference>
<dbReference type="NCBIfam" id="NF010061">
    <property type="entry name" value="PRK13538.1"/>
    <property type="match status" value="1"/>
</dbReference>
<dbReference type="PANTHER" id="PTHR43499">
    <property type="entry name" value="ABC TRANSPORTER I FAMILY MEMBER 1"/>
    <property type="match status" value="1"/>
</dbReference>
<dbReference type="PANTHER" id="PTHR43499:SF1">
    <property type="entry name" value="ABC TRANSPORTER I FAMILY MEMBER 1"/>
    <property type="match status" value="1"/>
</dbReference>
<dbReference type="Pfam" id="PF00005">
    <property type="entry name" value="ABC_tran"/>
    <property type="match status" value="1"/>
</dbReference>
<dbReference type="SMART" id="SM00382">
    <property type="entry name" value="AAA"/>
    <property type="match status" value="1"/>
</dbReference>
<dbReference type="SUPFAM" id="SSF52540">
    <property type="entry name" value="P-loop containing nucleoside triphosphate hydrolases"/>
    <property type="match status" value="1"/>
</dbReference>
<dbReference type="PROSITE" id="PS00211">
    <property type="entry name" value="ABC_TRANSPORTER_1"/>
    <property type="match status" value="1"/>
</dbReference>
<dbReference type="PROSITE" id="PS50893">
    <property type="entry name" value="ABC_TRANSPORTER_2"/>
    <property type="match status" value="1"/>
</dbReference>
<dbReference type="PROSITE" id="PS51243">
    <property type="entry name" value="CCMA"/>
    <property type="match status" value="1"/>
</dbReference>
<organism>
    <name type="scientific">Yersinia pseudotuberculosis serotype I (strain IP32953)</name>
    <dbReference type="NCBI Taxonomy" id="273123"/>
    <lineage>
        <taxon>Bacteria</taxon>
        <taxon>Pseudomonadati</taxon>
        <taxon>Pseudomonadota</taxon>
        <taxon>Gammaproteobacteria</taxon>
        <taxon>Enterobacterales</taxon>
        <taxon>Yersiniaceae</taxon>
        <taxon>Yersinia</taxon>
    </lineage>
</organism>
<gene>
    <name evidence="1" type="primary">ccmA</name>
    <name type="ordered locus">YPTB2649</name>
</gene>
<accession>Q668T8</accession>
<evidence type="ECO:0000255" key="1">
    <source>
        <dbReference type="HAMAP-Rule" id="MF_01707"/>
    </source>
</evidence>
<feature type="chain" id="PRO_0000092227" description="Cytochrome c biogenesis ATP-binding export protein CcmA">
    <location>
        <begin position="1"/>
        <end position="218"/>
    </location>
</feature>
<feature type="domain" description="ABC transporter" evidence="1">
    <location>
        <begin position="2"/>
        <end position="217"/>
    </location>
</feature>
<feature type="binding site" evidence="1">
    <location>
        <begin position="34"/>
        <end position="41"/>
    </location>
    <ligand>
        <name>ATP</name>
        <dbReference type="ChEBI" id="CHEBI:30616"/>
    </ligand>
</feature>